<sequence length="230" mass="25354">MNDLVDTTEMYLRTIYDLEEEGVTPLRARIAERLEQSGPTVSQTVSRMERDGLLRVAGNRHLELTTKGRAMAIAVMRKHRLAERLLVDVIGLPWEEVHAEACRWEHVMSEDVERRLIKVLNNPTTSPFGNPIPGLLDLGAGPDASAANAKLVRLTELPSGSPVAVVVRQLTEHVQDDIDLITRLKDTGVVPNARVTVETSPAGNVIIIIPGHENVTLPHEMAHAVKVEKV</sequence>
<name>IDER_MYCLE</name>
<organism>
    <name type="scientific">Mycobacterium leprae (strain TN)</name>
    <dbReference type="NCBI Taxonomy" id="272631"/>
    <lineage>
        <taxon>Bacteria</taxon>
        <taxon>Bacillati</taxon>
        <taxon>Actinomycetota</taxon>
        <taxon>Actinomycetes</taxon>
        <taxon>Mycobacteriales</taxon>
        <taxon>Mycobacteriaceae</taxon>
        <taxon>Mycobacterium</taxon>
    </lineage>
</organism>
<reference key="1">
    <citation type="journal article" date="2001" name="Nature">
        <title>Massive gene decay in the leprosy bacillus.</title>
        <authorList>
            <person name="Cole S.T."/>
            <person name="Eiglmeier K."/>
            <person name="Parkhill J."/>
            <person name="James K.D."/>
            <person name="Thomson N.R."/>
            <person name="Wheeler P.R."/>
            <person name="Honore N."/>
            <person name="Garnier T."/>
            <person name="Churcher C.M."/>
            <person name="Harris D.E."/>
            <person name="Mungall K.L."/>
            <person name="Basham D."/>
            <person name="Brown D."/>
            <person name="Chillingworth T."/>
            <person name="Connor R."/>
            <person name="Davies R.M."/>
            <person name="Devlin K."/>
            <person name="Duthoy S."/>
            <person name="Feltwell T."/>
            <person name="Fraser A."/>
            <person name="Hamlin N."/>
            <person name="Holroyd S."/>
            <person name="Hornsby T."/>
            <person name="Jagels K."/>
            <person name="Lacroix C."/>
            <person name="Maclean J."/>
            <person name="Moule S."/>
            <person name="Murphy L.D."/>
            <person name="Oliver K."/>
            <person name="Quail M.A."/>
            <person name="Rajandream M.A."/>
            <person name="Rutherford K.M."/>
            <person name="Rutter S."/>
            <person name="Seeger K."/>
            <person name="Simon S."/>
            <person name="Simmonds M."/>
            <person name="Skelton J."/>
            <person name="Squares R."/>
            <person name="Squares S."/>
            <person name="Stevens K."/>
            <person name="Taylor K."/>
            <person name="Whitehead S."/>
            <person name="Woodward J.R."/>
            <person name="Barrell B.G."/>
        </authorList>
    </citation>
    <scope>NUCLEOTIDE SEQUENCE [LARGE SCALE GENOMIC DNA]</scope>
    <source>
        <strain>TN</strain>
    </source>
</reference>
<proteinExistence type="inferred from homology"/>
<gene>
    <name type="primary">ideR</name>
    <name type="ordered locus">ML1013</name>
</gene>
<evidence type="ECO:0000250" key="1"/>
<evidence type="ECO:0000255" key="2">
    <source>
        <dbReference type="PROSITE-ProRule" id="PRU00296"/>
    </source>
</evidence>
<evidence type="ECO:0000305" key="3"/>
<comment type="function">
    <text evidence="1">Metal-dependent DNA-binding protein that controls transcription of many genes involved in iron metabolism.</text>
</comment>
<comment type="subunit">
    <text evidence="1">Homodimer.</text>
</comment>
<comment type="subcellular location">
    <subcellularLocation>
        <location evidence="1">Cytoplasm</location>
    </subcellularLocation>
</comment>
<comment type="similarity">
    <text evidence="3">Belongs to the DtxR/MntR family.</text>
</comment>
<keyword id="KW-0963">Cytoplasm</keyword>
<keyword id="KW-0238">DNA-binding</keyword>
<keyword id="KW-0408">Iron</keyword>
<keyword id="KW-1185">Reference proteome</keyword>
<keyword id="KW-0678">Repressor</keyword>
<keyword id="KW-0804">Transcription</keyword>
<keyword id="KW-0805">Transcription regulation</keyword>
<protein>
    <recommendedName>
        <fullName>Iron-dependent repressor IdeR</fullName>
    </recommendedName>
</protein>
<feature type="chain" id="PRO_0000201107" description="Iron-dependent repressor IdeR">
    <location>
        <begin position="1"/>
        <end position="230"/>
    </location>
</feature>
<feature type="domain" description="HTH dtxR-type" evidence="2">
    <location>
        <begin position="4"/>
        <end position="65"/>
    </location>
</feature>
<dbReference type="EMBL" id="AL583920">
    <property type="protein sequence ID" value="CAC31394.1"/>
    <property type="molecule type" value="Genomic_DNA"/>
</dbReference>
<dbReference type="PIR" id="G87035">
    <property type="entry name" value="G87035"/>
</dbReference>
<dbReference type="RefSeq" id="NP_301749.1">
    <property type="nucleotide sequence ID" value="NC_002677.1"/>
</dbReference>
<dbReference type="RefSeq" id="WP_010908073.1">
    <property type="nucleotide sequence ID" value="NC_002677.1"/>
</dbReference>
<dbReference type="SMR" id="Q9CCB5"/>
<dbReference type="STRING" id="272631.gene:17574839"/>
<dbReference type="KEGG" id="mle:ML1013"/>
<dbReference type="PATRIC" id="fig|272631.5.peg.1843"/>
<dbReference type="Leproma" id="ML1013"/>
<dbReference type="eggNOG" id="COG1321">
    <property type="taxonomic scope" value="Bacteria"/>
</dbReference>
<dbReference type="HOGENOM" id="CLU_069532_0_0_11"/>
<dbReference type="OrthoDB" id="3208141at2"/>
<dbReference type="Proteomes" id="UP000000806">
    <property type="component" value="Chromosome"/>
</dbReference>
<dbReference type="GO" id="GO:0005737">
    <property type="term" value="C:cytoplasm"/>
    <property type="evidence" value="ECO:0007669"/>
    <property type="project" value="UniProtKB-SubCell"/>
</dbReference>
<dbReference type="GO" id="GO:0003677">
    <property type="term" value="F:DNA binding"/>
    <property type="evidence" value="ECO:0007669"/>
    <property type="project" value="UniProtKB-KW"/>
</dbReference>
<dbReference type="GO" id="GO:0003700">
    <property type="term" value="F:DNA-binding transcription factor activity"/>
    <property type="evidence" value="ECO:0007669"/>
    <property type="project" value="InterPro"/>
</dbReference>
<dbReference type="GO" id="GO:0046983">
    <property type="term" value="F:protein dimerization activity"/>
    <property type="evidence" value="ECO:0007669"/>
    <property type="project" value="InterPro"/>
</dbReference>
<dbReference type="GO" id="GO:0046914">
    <property type="term" value="F:transition metal ion binding"/>
    <property type="evidence" value="ECO:0007669"/>
    <property type="project" value="InterPro"/>
</dbReference>
<dbReference type="GO" id="GO:0045892">
    <property type="term" value="P:negative regulation of DNA-templated transcription"/>
    <property type="evidence" value="ECO:0007669"/>
    <property type="project" value="TreeGrafter"/>
</dbReference>
<dbReference type="FunFam" id="1.10.60.10:FF:000001">
    <property type="entry name" value="Iron dependent repressor"/>
    <property type="match status" value="1"/>
</dbReference>
<dbReference type="FunFam" id="1.10.10.10:FF:000067">
    <property type="entry name" value="Iron-dependent repressor IdeR"/>
    <property type="match status" value="1"/>
</dbReference>
<dbReference type="Gene3D" id="2.30.30.90">
    <property type="match status" value="1"/>
</dbReference>
<dbReference type="Gene3D" id="1.10.60.10">
    <property type="entry name" value="Iron dependent repressor, metal binding and dimerisation domain"/>
    <property type="match status" value="1"/>
</dbReference>
<dbReference type="Gene3D" id="1.10.10.10">
    <property type="entry name" value="Winged helix-like DNA-binding domain superfamily/Winged helix DNA-binding domain"/>
    <property type="match status" value="1"/>
</dbReference>
<dbReference type="InterPro" id="IPR040767">
    <property type="entry name" value="DtxR/IdeR_SH3"/>
</dbReference>
<dbReference type="InterPro" id="IPR050536">
    <property type="entry name" value="DtxR_MntR_Metal-Reg"/>
</dbReference>
<dbReference type="InterPro" id="IPR007167">
    <property type="entry name" value="Fe-transptr_FeoA-like"/>
</dbReference>
<dbReference type="InterPro" id="IPR001367">
    <property type="entry name" value="Fe_dep_repressor"/>
</dbReference>
<dbReference type="InterPro" id="IPR036421">
    <property type="entry name" value="Fe_dep_repressor_sf"/>
</dbReference>
<dbReference type="InterPro" id="IPR038157">
    <property type="entry name" value="FeoA_core_dom"/>
</dbReference>
<dbReference type="InterPro" id="IPR022687">
    <property type="entry name" value="HTH_DTXR"/>
</dbReference>
<dbReference type="InterPro" id="IPR022689">
    <property type="entry name" value="Iron_dep_repressor"/>
</dbReference>
<dbReference type="InterPro" id="IPR008988">
    <property type="entry name" value="Transcriptional_repressor_C"/>
</dbReference>
<dbReference type="InterPro" id="IPR036388">
    <property type="entry name" value="WH-like_DNA-bd_sf"/>
</dbReference>
<dbReference type="InterPro" id="IPR036390">
    <property type="entry name" value="WH_DNA-bd_sf"/>
</dbReference>
<dbReference type="PANTHER" id="PTHR33238">
    <property type="entry name" value="IRON (METAL) DEPENDENT REPRESSOR, DTXR FAMILY"/>
    <property type="match status" value="1"/>
</dbReference>
<dbReference type="PANTHER" id="PTHR33238:SF10">
    <property type="entry name" value="IRON-DEPENDENT REPRESSOR IDER"/>
    <property type="match status" value="1"/>
</dbReference>
<dbReference type="Pfam" id="PF18357">
    <property type="entry name" value="DtxR"/>
    <property type="match status" value="1"/>
</dbReference>
<dbReference type="Pfam" id="PF02742">
    <property type="entry name" value="Fe_dep_repr_C"/>
    <property type="match status" value="1"/>
</dbReference>
<dbReference type="Pfam" id="PF01325">
    <property type="entry name" value="Fe_dep_repress"/>
    <property type="match status" value="1"/>
</dbReference>
<dbReference type="SMART" id="SM00899">
    <property type="entry name" value="FeoA"/>
    <property type="match status" value="1"/>
</dbReference>
<dbReference type="SMART" id="SM00529">
    <property type="entry name" value="HTH_DTXR"/>
    <property type="match status" value="1"/>
</dbReference>
<dbReference type="SUPFAM" id="SSF50037">
    <property type="entry name" value="C-terminal domain of transcriptional repressors"/>
    <property type="match status" value="1"/>
</dbReference>
<dbReference type="SUPFAM" id="SSF47979">
    <property type="entry name" value="Iron-dependent repressor protein, dimerization domain"/>
    <property type="match status" value="1"/>
</dbReference>
<dbReference type="SUPFAM" id="SSF46785">
    <property type="entry name" value="Winged helix' DNA-binding domain"/>
    <property type="match status" value="1"/>
</dbReference>
<dbReference type="PROSITE" id="PS50944">
    <property type="entry name" value="HTH_DTXR"/>
    <property type="match status" value="1"/>
</dbReference>
<accession>Q9CCB5</accession>